<proteinExistence type="predicted"/>
<organism>
    <name type="scientific">Mycobacterium tuberculosis (strain CDC 1551 / Oshkosh)</name>
    <dbReference type="NCBI Taxonomy" id="83331"/>
    <lineage>
        <taxon>Bacteria</taxon>
        <taxon>Bacillati</taxon>
        <taxon>Actinomycetota</taxon>
        <taxon>Actinomycetes</taxon>
        <taxon>Mycobacteriales</taxon>
        <taxon>Mycobacteriaceae</taxon>
        <taxon>Mycobacterium</taxon>
        <taxon>Mycobacterium tuberculosis complex</taxon>
    </lineage>
</organism>
<protein>
    <recommendedName>
        <fullName>Uncharacterized protein MT0055</fullName>
    </recommendedName>
</protein>
<name>Y049_MYCTO</name>
<accession>P9WM84</accession>
<accession>L0T5J0</accession>
<accession>P64677</accession>
<accession>P71706</accession>
<reference key="1">
    <citation type="journal article" date="2002" name="J. Bacteriol.">
        <title>Whole-genome comparison of Mycobacterium tuberculosis clinical and laboratory strains.</title>
        <authorList>
            <person name="Fleischmann R.D."/>
            <person name="Alland D."/>
            <person name="Eisen J.A."/>
            <person name="Carpenter L."/>
            <person name="White O."/>
            <person name="Peterson J.D."/>
            <person name="DeBoy R.T."/>
            <person name="Dodson R.J."/>
            <person name="Gwinn M.L."/>
            <person name="Haft D.H."/>
            <person name="Hickey E.K."/>
            <person name="Kolonay J.F."/>
            <person name="Nelson W.C."/>
            <person name="Umayam L.A."/>
            <person name="Ermolaeva M.D."/>
            <person name="Salzberg S.L."/>
            <person name="Delcher A."/>
            <person name="Utterback T.R."/>
            <person name="Weidman J.F."/>
            <person name="Khouri H.M."/>
            <person name="Gill J."/>
            <person name="Mikula A."/>
            <person name="Bishai W."/>
            <person name="Jacobs W.R. Jr."/>
            <person name="Venter J.C."/>
            <person name="Fraser C.M."/>
        </authorList>
    </citation>
    <scope>NUCLEOTIDE SEQUENCE [LARGE SCALE GENOMIC DNA]</scope>
    <source>
        <strain>CDC 1551 / Oshkosh</strain>
    </source>
</reference>
<feature type="chain" id="PRO_0000427348" description="Uncharacterized protein MT0055">
    <location>
        <begin position="1"/>
        <end position="137"/>
    </location>
</feature>
<feature type="region of interest" description="Disordered" evidence="1">
    <location>
        <begin position="116"/>
        <end position="137"/>
    </location>
</feature>
<feature type="compositionally biased region" description="Polar residues" evidence="1">
    <location>
        <begin position="125"/>
        <end position="137"/>
    </location>
</feature>
<keyword id="KW-1185">Reference proteome</keyword>
<evidence type="ECO:0000256" key="1">
    <source>
        <dbReference type="SAM" id="MobiDB-lite"/>
    </source>
</evidence>
<sequence length="137" mass="15032">MDYTLRRRSLLAEVYSGRTGVSEVCDANPYLLRAAKFHGKPSRVICPICRKEQLTLVSWVFGEHLGAVSGSARTAEELILLATRFSEFAVHVVEVCRTCSWNHLVKSYVLGAARPARPPRGSGGTRTARNGARTASE</sequence>
<gene>
    <name type="ordered locus">MT0055</name>
</gene>
<dbReference type="EMBL" id="AE000516">
    <property type="protein sequence ID" value="AAK44277.1"/>
    <property type="molecule type" value="Genomic_DNA"/>
</dbReference>
<dbReference type="PIR" id="A70913">
    <property type="entry name" value="A70913"/>
</dbReference>
<dbReference type="KEGG" id="mtc:MT0055"/>
<dbReference type="PATRIC" id="fig|83331.31.peg.55"/>
<dbReference type="HOGENOM" id="CLU_124443_1_0_11"/>
<dbReference type="Proteomes" id="UP000001020">
    <property type="component" value="Chromosome"/>
</dbReference>
<dbReference type="InterPro" id="IPR035169">
    <property type="entry name" value="DUF5318"/>
</dbReference>
<dbReference type="Pfam" id="PF17249">
    <property type="entry name" value="DUF5318"/>
    <property type="match status" value="1"/>
</dbReference>